<comment type="function">
    <text evidence="1">Involved in mRNA degradation. Catalyzes the phosphorolysis of single-stranded polyribonucleotides processively in the 3'- to 5'-direction.</text>
</comment>
<comment type="catalytic activity">
    <reaction evidence="1">
        <text>RNA(n+1) + phosphate = RNA(n) + a ribonucleoside 5'-diphosphate</text>
        <dbReference type="Rhea" id="RHEA:22096"/>
        <dbReference type="Rhea" id="RHEA-COMP:14527"/>
        <dbReference type="Rhea" id="RHEA-COMP:17342"/>
        <dbReference type="ChEBI" id="CHEBI:43474"/>
        <dbReference type="ChEBI" id="CHEBI:57930"/>
        <dbReference type="ChEBI" id="CHEBI:140395"/>
        <dbReference type="EC" id="2.7.7.8"/>
    </reaction>
</comment>
<comment type="cofactor">
    <cofactor evidence="1">
        <name>Mg(2+)</name>
        <dbReference type="ChEBI" id="CHEBI:18420"/>
    </cofactor>
</comment>
<comment type="subcellular location">
    <subcellularLocation>
        <location evidence="1">Cytoplasm</location>
    </subcellularLocation>
</comment>
<comment type="similarity">
    <text evidence="1">Belongs to the polyribonucleotide nucleotidyltransferase family.</text>
</comment>
<keyword id="KW-0963">Cytoplasm</keyword>
<keyword id="KW-0460">Magnesium</keyword>
<keyword id="KW-0479">Metal-binding</keyword>
<keyword id="KW-0548">Nucleotidyltransferase</keyword>
<keyword id="KW-0694">RNA-binding</keyword>
<keyword id="KW-0808">Transferase</keyword>
<protein>
    <recommendedName>
        <fullName evidence="1">Polyribonucleotide nucleotidyltransferase</fullName>
        <ecNumber evidence="1">2.7.7.8</ecNumber>
    </recommendedName>
    <alternativeName>
        <fullName evidence="1">Polynucleotide phosphorylase</fullName>
        <shortName evidence="1">PNPase</shortName>
    </alternativeName>
</protein>
<evidence type="ECO:0000255" key="1">
    <source>
        <dbReference type="HAMAP-Rule" id="MF_01595"/>
    </source>
</evidence>
<gene>
    <name evidence="1" type="primary">pnp</name>
    <name type="ordered locus">CTLon_0214</name>
</gene>
<reference key="1">
    <citation type="journal article" date="2008" name="Genome Res.">
        <title>Chlamydia trachomatis: genome sequence analysis of lymphogranuloma venereum isolates.</title>
        <authorList>
            <person name="Thomson N.R."/>
            <person name="Holden M.T.G."/>
            <person name="Carder C."/>
            <person name="Lennard N."/>
            <person name="Lockey S.J."/>
            <person name="Marsh P."/>
            <person name="Skipp P."/>
            <person name="O'Connor C.D."/>
            <person name="Goodhead I."/>
            <person name="Norbertzcak H."/>
            <person name="Harris B."/>
            <person name="Ormond D."/>
            <person name="Rance R."/>
            <person name="Quail M.A."/>
            <person name="Parkhill J."/>
            <person name="Stephens R.S."/>
            <person name="Clarke I.N."/>
        </authorList>
    </citation>
    <scope>NUCLEOTIDE SEQUENCE [LARGE SCALE GENOMIC DNA]</scope>
    <source>
        <strain>UCH-1/proctitis</strain>
    </source>
</reference>
<accession>B0BAV0</accession>
<proteinExistence type="inferred from homology"/>
<feature type="chain" id="PRO_1000192469" description="Polyribonucleotide nucleotidyltransferase">
    <location>
        <begin position="1"/>
        <end position="695"/>
    </location>
</feature>
<feature type="domain" description="KH" evidence="1">
    <location>
        <begin position="553"/>
        <end position="612"/>
    </location>
</feature>
<feature type="domain" description="S1 motif" evidence="1">
    <location>
        <begin position="622"/>
        <end position="690"/>
    </location>
</feature>
<feature type="binding site" evidence="1">
    <location>
        <position position="486"/>
    </location>
    <ligand>
        <name>Mg(2+)</name>
        <dbReference type="ChEBI" id="CHEBI:18420"/>
    </ligand>
</feature>
<feature type="binding site" evidence="1">
    <location>
        <position position="492"/>
    </location>
    <ligand>
        <name>Mg(2+)</name>
        <dbReference type="ChEBI" id="CHEBI:18420"/>
    </ligand>
</feature>
<sequence length="695" mass="75403">MAFETFSVALDKDKTLIFETGKIARQASGAVLVKMNETWVFSSACAASLSEAVGFLPFRVDYQEKFSSAGRTSGGFLKREGRPSEREILVSRLIDRSLRPSFPNRLMQDIQVLSYVWSYDGKTLPDPLAICGASAALAISEVPQNCIIAGVRVGLVGGKWVINPTRDELSASKLDLVMAGTASAVLMIEGHCDFLTEEQVLEAIAFGQTYIAKICDAIEAWQKAIGKQKNFSAVLDMPEDVQNVVSDFIREKFEKALSFRDKEALEQASKELEESVIANLVQEENSDFSLLNVKAAFKTAKSNQMRALIQDLGIRVDGRTTTEIRPISIETPLLPRTHGSCLFTRGETQSMAVCTLGGENMAQRFEDLNGDGAARFYLQYFFPPFSVGEVGRIGSPGRREIGHGKLAEKALSHVLPETSRFPYIIRLESNITESNGSSSMASVCGGCLALMDAGVPIKAPVAGIAMGLILDRDQAIILSDISGIEDHLGDMDFKVAGTAKGITAFQMDIKIEGITHKIMEQALAQAKQGRSHILNLMTQVLASPKGTVSKYAPRIETMQINTSKIATVIGPGGKQIRQIIERSGAQVDINDDGVINIAASTQESINKAKELIEGLTGEVEVGKVYNGRVTSIATFGVFVEVLPGKEGLCHISELSKQKVDNISDFVKEGDKLAVKLLSINEKGQLKLSHKATLED</sequence>
<organism>
    <name type="scientific">Chlamydia trachomatis serovar L2b (strain UCH-1/proctitis)</name>
    <dbReference type="NCBI Taxonomy" id="471473"/>
    <lineage>
        <taxon>Bacteria</taxon>
        <taxon>Pseudomonadati</taxon>
        <taxon>Chlamydiota</taxon>
        <taxon>Chlamydiia</taxon>
        <taxon>Chlamydiales</taxon>
        <taxon>Chlamydiaceae</taxon>
        <taxon>Chlamydia/Chlamydophila group</taxon>
        <taxon>Chlamydia</taxon>
    </lineage>
</organism>
<dbReference type="EC" id="2.7.7.8" evidence="1"/>
<dbReference type="EMBL" id="AM884177">
    <property type="protein sequence ID" value="CAP06612.1"/>
    <property type="molecule type" value="Genomic_DNA"/>
</dbReference>
<dbReference type="RefSeq" id="WP_009873451.1">
    <property type="nucleotide sequence ID" value="NC_010280.2"/>
</dbReference>
<dbReference type="SMR" id="B0BAV0"/>
<dbReference type="KEGG" id="ctl:CTLon_0214"/>
<dbReference type="HOGENOM" id="CLU_004217_2_2_0"/>
<dbReference type="Proteomes" id="UP001154401">
    <property type="component" value="Chromosome"/>
</dbReference>
<dbReference type="GO" id="GO:0005829">
    <property type="term" value="C:cytosol"/>
    <property type="evidence" value="ECO:0007669"/>
    <property type="project" value="TreeGrafter"/>
</dbReference>
<dbReference type="GO" id="GO:0000175">
    <property type="term" value="F:3'-5'-RNA exonuclease activity"/>
    <property type="evidence" value="ECO:0007669"/>
    <property type="project" value="TreeGrafter"/>
</dbReference>
<dbReference type="GO" id="GO:0000287">
    <property type="term" value="F:magnesium ion binding"/>
    <property type="evidence" value="ECO:0007669"/>
    <property type="project" value="UniProtKB-UniRule"/>
</dbReference>
<dbReference type="GO" id="GO:0004654">
    <property type="term" value="F:polyribonucleotide nucleotidyltransferase activity"/>
    <property type="evidence" value="ECO:0007669"/>
    <property type="project" value="UniProtKB-UniRule"/>
</dbReference>
<dbReference type="GO" id="GO:0003723">
    <property type="term" value="F:RNA binding"/>
    <property type="evidence" value="ECO:0007669"/>
    <property type="project" value="UniProtKB-UniRule"/>
</dbReference>
<dbReference type="GO" id="GO:0006402">
    <property type="term" value="P:mRNA catabolic process"/>
    <property type="evidence" value="ECO:0007669"/>
    <property type="project" value="UniProtKB-UniRule"/>
</dbReference>
<dbReference type="GO" id="GO:0006396">
    <property type="term" value="P:RNA processing"/>
    <property type="evidence" value="ECO:0007669"/>
    <property type="project" value="InterPro"/>
</dbReference>
<dbReference type="CDD" id="cd02393">
    <property type="entry name" value="KH-I_PNPase"/>
    <property type="match status" value="1"/>
</dbReference>
<dbReference type="CDD" id="cd11363">
    <property type="entry name" value="RNase_PH_PNPase_1"/>
    <property type="match status" value="1"/>
</dbReference>
<dbReference type="CDD" id="cd11364">
    <property type="entry name" value="RNase_PH_PNPase_2"/>
    <property type="match status" value="1"/>
</dbReference>
<dbReference type="CDD" id="cd04472">
    <property type="entry name" value="S1_PNPase"/>
    <property type="match status" value="1"/>
</dbReference>
<dbReference type="FunFam" id="3.30.1370.10:FF:000001">
    <property type="entry name" value="Polyribonucleotide nucleotidyltransferase"/>
    <property type="match status" value="1"/>
</dbReference>
<dbReference type="FunFam" id="3.30.230.70:FF:000001">
    <property type="entry name" value="Polyribonucleotide nucleotidyltransferase"/>
    <property type="match status" value="1"/>
</dbReference>
<dbReference type="FunFam" id="3.30.230.70:FF:000049">
    <property type="entry name" value="Polyribonucleotide nucleotidyltransferase"/>
    <property type="match status" value="1"/>
</dbReference>
<dbReference type="FunFam" id="2.40.50.140:FF:000158">
    <property type="entry name" value="Polyribonucleotide nucleotidyltransferase 1, chloroplastic"/>
    <property type="match status" value="1"/>
</dbReference>
<dbReference type="Gene3D" id="3.30.230.70">
    <property type="entry name" value="GHMP Kinase, N-terminal domain"/>
    <property type="match status" value="2"/>
</dbReference>
<dbReference type="Gene3D" id="3.30.1370.10">
    <property type="entry name" value="K Homology domain, type 1"/>
    <property type="match status" value="1"/>
</dbReference>
<dbReference type="Gene3D" id="2.40.50.140">
    <property type="entry name" value="Nucleic acid-binding proteins"/>
    <property type="match status" value="1"/>
</dbReference>
<dbReference type="HAMAP" id="MF_01595">
    <property type="entry name" value="PNPase"/>
    <property type="match status" value="1"/>
</dbReference>
<dbReference type="InterPro" id="IPR001247">
    <property type="entry name" value="ExoRNase_PH_dom1"/>
</dbReference>
<dbReference type="InterPro" id="IPR015847">
    <property type="entry name" value="ExoRNase_PH_dom2"/>
</dbReference>
<dbReference type="InterPro" id="IPR036345">
    <property type="entry name" value="ExoRNase_PH_dom2_sf"/>
</dbReference>
<dbReference type="InterPro" id="IPR004087">
    <property type="entry name" value="KH_dom"/>
</dbReference>
<dbReference type="InterPro" id="IPR004088">
    <property type="entry name" value="KH_dom_type_1"/>
</dbReference>
<dbReference type="InterPro" id="IPR036612">
    <property type="entry name" value="KH_dom_type_1_sf"/>
</dbReference>
<dbReference type="InterPro" id="IPR012340">
    <property type="entry name" value="NA-bd_OB-fold"/>
</dbReference>
<dbReference type="InterPro" id="IPR012162">
    <property type="entry name" value="PNPase"/>
</dbReference>
<dbReference type="InterPro" id="IPR027408">
    <property type="entry name" value="PNPase/RNase_PH_dom_sf"/>
</dbReference>
<dbReference type="InterPro" id="IPR015848">
    <property type="entry name" value="PNPase_PH_RNA-bd_bac/org-type"/>
</dbReference>
<dbReference type="InterPro" id="IPR036456">
    <property type="entry name" value="PNPase_PH_RNA-bd_sf"/>
</dbReference>
<dbReference type="InterPro" id="IPR020568">
    <property type="entry name" value="Ribosomal_Su5_D2-typ_SF"/>
</dbReference>
<dbReference type="InterPro" id="IPR003029">
    <property type="entry name" value="S1_domain"/>
</dbReference>
<dbReference type="NCBIfam" id="TIGR03591">
    <property type="entry name" value="polynuc_phos"/>
    <property type="match status" value="1"/>
</dbReference>
<dbReference type="NCBIfam" id="NF008805">
    <property type="entry name" value="PRK11824.1"/>
    <property type="match status" value="1"/>
</dbReference>
<dbReference type="PANTHER" id="PTHR11252">
    <property type="entry name" value="POLYRIBONUCLEOTIDE NUCLEOTIDYLTRANSFERASE"/>
    <property type="match status" value="1"/>
</dbReference>
<dbReference type="PANTHER" id="PTHR11252:SF0">
    <property type="entry name" value="POLYRIBONUCLEOTIDE NUCLEOTIDYLTRANSFERASE 1, MITOCHONDRIAL"/>
    <property type="match status" value="1"/>
</dbReference>
<dbReference type="Pfam" id="PF00013">
    <property type="entry name" value="KH_1"/>
    <property type="match status" value="1"/>
</dbReference>
<dbReference type="Pfam" id="PF03726">
    <property type="entry name" value="PNPase"/>
    <property type="match status" value="1"/>
</dbReference>
<dbReference type="Pfam" id="PF01138">
    <property type="entry name" value="RNase_PH"/>
    <property type="match status" value="2"/>
</dbReference>
<dbReference type="Pfam" id="PF03725">
    <property type="entry name" value="RNase_PH_C"/>
    <property type="match status" value="2"/>
</dbReference>
<dbReference type="Pfam" id="PF00575">
    <property type="entry name" value="S1"/>
    <property type="match status" value="1"/>
</dbReference>
<dbReference type="PIRSF" id="PIRSF005499">
    <property type="entry name" value="PNPase"/>
    <property type="match status" value="1"/>
</dbReference>
<dbReference type="SMART" id="SM00322">
    <property type="entry name" value="KH"/>
    <property type="match status" value="1"/>
</dbReference>
<dbReference type="SMART" id="SM00316">
    <property type="entry name" value="S1"/>
    <property type="match status" value="1"/>
</dbReference>
<dbReference type="SUPFAM" id="SSF54791">
    <property type="entry name" value="Eukaryotic type KH-domain (KH-domain type I)"/>
    <property type="match status" value="1"/>
</dbReference>
<dbReference type="SUPFAM" id="SSF50249">
    <property type="entry name" value="Nucleic acid-binding proteins"/>
    <property type="match status" value="1"/>
</dbReference>
<dbReference type="SUPFAM" id="SSF46915">
    <property type="entry name" value="Polynucleotide phosphorylase/guanosine pentaphosphate synthase (PNPase/GPSI), domain 3"/>
    <property type="match status" value="1"/>
</dbReference>
<dbReference type="SUPFAM" id="SSF55666">
    <property type="entry name" value="Ribonuclease PH domain 2-like"/>
    <property type="match status" value="2"/>
</dbReference>
<dbReference type="SUPFAM" id="SSF54211">
    <property type="entry name" value="Ribosomal protein S5 domain 2-like"/>
    <property type="match status" value="2"/>
</dbReference>
<dbReference type="PROSITE" id="PS50084">
    <property type="entry name" value="KH_TYPE_1"/>
    <property type="match status" value="1"/>
</dbReference>
<dbReference type="PROSITE" id="PS50126">
    <property type="entry name" value="S1"/>
    <property type="match status" value="1"/>
</dbReference>
<name>PNP_CHLTB</name>